<keyword id="KW-0028">Amino-acid biosynthesis</keyword>
<keyword id="KW-0057">Aromatic amino acid biosynthesis</keyword>
<keyword id="KW-0170">Cobalt</keyword>
<keyword id="KW-0963">Cytoplasm</keyword>
<keyword id="KW-0456">Lyase</keyword>
<keyword id="KW-0479">Metal-binding</keyword>
<keyword id="KW-0520">NAD</keyword>
<keyword id="KW-0547">Nucleotide-binding</keyword>
<keyword id="KW-0862">Zinc</keyword>
<name>AROB_SHEB8</name>
<organism>
    <name type="scientific">Shewanella baltica (strain OS185)</name>
    <dbReference type="NCBI Taxonomy" id="402882"/>
    <lineage>
        <taxon>Bacteria</taxon>
        <taxon>Pseudomonadati</taxon>
        <taxon>Pseudomonadota</taxon>
        <taxon>Gammaproteobacteria</taxon>
        <taxon>Alteromonadales</taxon>
        <taxon>Shewanellaceae</taxon>
        <taxon>Shewanella</taxon>
    </lineage>
</organism>
<accession>A6WTR1</accession>
<sequence>MKQIQVNLGVRSYPIYIGQNLMSDGETLSRYLLKKRILIVTNETVAPLYLKQIQETMASFGEVESVILPDGEQFKDLAHLDTIFTALLQQNYGRDSVLVALGGGVIGDMTGFAAACYQRGIDFIQIPTTLLSQVDSSVGGKTAVNHPLGKNMIGAFYQPQIVLIDTLCLHTLPAREFAAGMAEVIKYGIMWDADFFQWLEDNVTTLKTLDAQALVYAISRCCEIKADVVSQDETEQGVRALLNLGHTFGHAIEAEMGYGNWLHGEAVSAGTVLAAQTAKALGLIDESIVCRIIQLLQAFDLPVSAPESMDFDSFIQHMRRDKKVLGGQIRLVLPTAIGRADVFSQVTESTLEQVIRCA</sequence>
<comment type="function">
    <text evidence="1">Catalyzes the conversion of 3-deoxy-D-arabino-heptulosonate 7-phosphate (DAHP) to dehydroquinate (DHQ).</text>
</comment>
<comment type="catalytic activity">
    <reaction evidence="1">
        <text>7-phospho-2-dehydro-3-deoxy-D-arabino-heptonate = 3-dehydroquinate + phosphate</text>
        <dbReference type="Rhea" id="RHEA:21968"/>
        <dbReference type="ChEBI" id="CHEBI:32364"/>
        <dbReference type="ChEBI" id="CHEBI:43474"/>
        <dbReference type="ChEBI" id="CHEBI:58394"/>
        <dbReference type="EC" id="4.2.3.4"/>
    </reaction>
</comment>
<comment type="cofactor">
    <cofactor evidence="1">
        <name>Co(2+)</name>
        <dbReference type="ChEBI" id="CHEBI:48828"/>
    </cofactor>
    <cofactor evidence="1">
        <name>Zn(2+)</name>
        <dbReference type="ChEBI" id="CHEBI:29105"/>
    </cofactor>
    <text evidence="1">Binds 1 divalent metal cation per subunit. Can use either Co(2+) or Zn(2+).</text>
</comment>
<comment type="cofactor">
    <cofactor evidence="1">
        <name>NAD(+)</name>
        <dbReference type="ChEBI" id="CHEBI:57540"/>
    </cofactor>
</comment>
<comment type="pathway">
    <text evidence="1">Metabolic intermediate biosynthesis; chorismate biosynthesis; chorismate from D-erythrose 4-phosphate and phosphoenolpyruvate: step 2/7.</text>
</comment>
<comment type="subcellular location">
    <subcellularLocation>
        <location evidence="1">Cytoplasm</location>
    </subcellularLocation>
</comment>
<comment type="similarity">
    <text evidence="1">Belongs to the sugar phosphate cyclases superfamily. Dehydroquinate synthase family.</text>
</comment>
<gene>
    <name evidence="1" type="primary">aroB</name>
    <name type="ordered locus">Shew185_4083</name>
</gene>
<feature type="chain" id="PRO_1000094607" description="3-dehydroquinate synthase">
    <location>
        <begin position="1"/>
        <end position="358"/>
    </location>
</feature>
<feature type="binding site" evidence="1">
    <location>
        <begin position="70"/>
        <end position="75"/>
    </location>
    <ligand>
        <name>NAD(+)</name>
        <dbReference type="ChEBI" id="CHEBI:57540"/>
    </ligand>
</feature>
<feature type="binding site" evidence="1">
    <location>
        <begin position="104"/>
        <end position="108"/>
    </location>
    <ligand>
        <name>NAD(+)</name>
        <dbReference type="ChEBI" id="CHEBI:57540"/>
    </ligand>
</feature>
<feature type="binding site" evidence="1">
    <location>
        <begin position="128"/>
        <end position="129"/>
    </location>
    <ligand>
        <name>NAD(+)</name>
        <dbReference type="ChEBI" id="CHEBI:57540"/>
    </ligand>
</feature>
<feature type="binding site" evidence="1">
    <location>
        <position position="141"/>
    </location>
    <ligand>
        <name>NAD(+)</name>
        <dbReference type="ChEBI" id="CHEBI:57540"/>
    </ligand>
</feature>
<feature type="binding site" evidence="1">
    <location>
        <position position="150"/>
    </location>
    <ligand>
        <name>NAD(+)</name>
        <dbReference type="ChEBI" id="CHEBI:57540"/>
    </ligand>
</feature>
<feature type="binding site" evidence="1">
    <location>
        <begin position="168"/>
        <end position="171"/>
    </location>
    <ligand>
        <name>NAD(+)</name>
        <dbReference type="ChEBI" id="CHEBI:57540"/>
    </ligand>
</feature>
<feature type="binding site" evidence="1">
    <location>
        <position position="183"/>
    </location>
    <ligand>
        <name>Zn(2+)</name>
        <dbReference type="ChEBI" id="CHEBI:29105"/>
    </ligand>
</feature>
<feature type="binding site" evidence="1">
    <location>
        <position position="246"/>
    </location>
    <ligand>
        <name>Zn(2+)</name>
        <dbReference type="ChEBI" id="CHEBI:29105"/>
    </ligand>
</feature>
<feature type="binding site" evidence="1">
    <location>
        <position position="263"/>
    </location>
    <ligand>
        <name>Zn(2+)</name>
        <dbReference type="ChEBI" id="CHEBI:29105"/>
    </ligand>
</feature>
<dbReference type="EC" id="4.2.3.4" evidence="1"/>
<dbReference type="EMBL" id="CP000753">
    <property type="protein sequence ID" value="ABS10200.1"/>
    <property type="molecule type" value="Genomic_DNA"/>
</dbReference>
<dbReference type="RefSeq" id="WP_012090484.1">
    <property type="nucleotide sequence ID" value="NC_009665.1"/>
</dbReference>
<dbReference type="SMR" id="A6WTR1"/>
<dbReference type="KEGG" id="sbm:Shew185_4083"/>
<dbReference type="HOGENOM" id="CLU_001201_0_2_6"/>
<dbReference type="UniPathway" id="UPA00053">
    <property type="reaction ID" value="UER00085"/>
</dbReference>
<dbReference type="GO" id="GO:0005737">
    <property type="term" value="C:cytoplasm"/>
    <property type="evidence" value="ECO:0007669"/>
    <property type="project" value="UniProtKB-SubCell"/>
</dbReference>
<dbReference type="GO" id="GO:0003856">
    <property type="term" value="F:3-dehydroquinate synthase activity"/>
    <property type="evidence" value="ECO:0007669"/>
    <property type="project" value="UniProtKB-UniRule"/>
</dbReference>
<dbReference type="GO" id="GO:0046872">
    <property type="term" value="F:metal ion binding"/>
    <property type="evidence" value="ECO:0007669"/>
    <property type="project" value="UniProtKB-KW"/>
</dbReference>
<dbReference type="GO" id="GO:0000166">
    <property type="term" value="F:nucleotide binding"/>
    <property type="evidence" value="ECO:0007669"/>
    <property type="project" value="UniProtKB-KW"/>
</dbReference>
<dbReference type="GO" id="GO:0008652">
    <property type="term" value="P:amino acid biosynthetic process"/>
    <property type="evidence" value="ECO:0007669"/>
    <property type="project" value="UniProtKB-KW"/>
</dbReference>
<dbReference type="GO" id="GO:0009073">
    <property type="term" value="P:aromatic amino acid family biosynthetic process"/>
    <property type="evidence" value="ECO:0007669"/>
    <property type="project" value="UniProtKB-KW"/>
</dbReference>
<dbReference type="GO" id="GO:0009423">
    <property type="term" value="P:chorismate biosynthetic process"/>
    <property type="evidence" value="ECO:0007669"/>
    <property type="project" value="UniProtKB-UniRule"/>
</dbReference>
<dbReference type="CDD" id="cd08195">
    <property type="entry name" value="DHQS"/>
    <property type="match status" value="1"/>
</dbReference>
<dbReference type="FunFam" id="1.20.1090.10:FF:000002">
    <property type="entry name" value="3-dehydroquinate synthase"/>
    <property type="match status" value="1"/>
</dbReference>
<dbReference type="FunFam" id="3.40.50.1970:FF:000001">
    <property type="entry name" value="3-dehydroquinate synthase"/>
    <property type="match status" value="1"/>
</dbReference>
<dbReference type="Gene3D" id="3.40.50.1970">
    <property type="match status" value="1"/>
</dbReference>
<dbReference type="Gene3D" id="1.20.1090.10">
    <property type="entry name" value="Dehydroquinate synthase-like - alpha domain"/>
    <property type="match status" value="1"/>
</dbReference>
<dbReference type="HAMAP" id="MF_00110">
    <property type="entry name" value="DHQ_synthase"/>
    <property type="match status" value="1"/>
</dbReference>
<dbReference type="InterPro" id="IPR050071">
    <property type="entry name" value="Dehydroquinate_synthase"/>
</dbReference>
<dbReference type="InterPro" id="IPR016037">
    <property type="entry name" value="DHQ_synth_AroB"/>
</dbReference>
<dbReference type="InterPro" id="IPR030963">
    <property type="entry name" value="DHQ_synth_fam"/>
</dbReference>
<dbReference type="InterPro" id="IPR030960">
    <property type="entry name" value="DHQS/DOIS_N"/>
</dbReference>
<dbReference type="InterPro" id="IPR056179">
    <property type="entry name" value="DHQS_C"/>
</dbReference>
<dbReference type="NCBIfam" id="TIGR01357">
    <property type="entry name" value="aroB"/>
    <property type="match status" value="1"/>
</dbReference>
<dbReference type="PANTHER" id="PTHR43622">
    <property type="entry name" value="3-DEHYDROQUINATE SYNTHASE"/>
    <property type="match status" value="1"/>
</dbReference>
<dbReference type="PANTHER" id="PTHR43622:SF7">
    <property type="entry name" value="3-DEHYDROQUINATE SYNTHASE, CHLOROPLASTIC"/>
    <property type="match status" value="1"/>
</dbReference>
<dbReference type="Pfam" id="PF01761">
    <property type="entry name" value="DHQ_synthase"/>
    <property type="match status" value="1"/>
</dbReference>
<dbReference type="Pfam" id="PF24621">
    <property type="entry name" value="DHQS_C"/>
    <property type="match status" value="1"/>
</dbReference>
<dbReference type="PIRSF" id="PIRSF001455">
    <property type="entry name" value="DHQ_synth"/>
    <property type="match status" value="1"/>
</dbReference>
<dbReference type="SUPFAM" id="SSF56796">
    <property type="entry name" value="Dehydroquinate synthase-like"/>
    <property type="match status" value="1"/>
</dbReference>
<evidence type="ECO:0000255" key="1">
    <source>
        <dbReference type="HAMAP-Rule" id="MF_00110"/>
    </source>
</evidence>
<protein>
    <recommendedName>
        <fullName evidence="1">3-dehydroquinate synthase</fullName>
        <shortName evidence="1">DHQS</shortName>
        <ecNumber evidence="1">4.2.3.4</ecNumber>
    </recommendedName>
</protein>
<reference key="1">
    <citation type="submission" date="2007-07" db="EMBL/GenBank/DDBJ databases">
        <title>Complete sequence of chromosome of Shewanella baltica OS185.</title>
        <authorList>
            <consortium name="US DOE Joint Genome Institute"/>
            <person name="Copeland A."/>
            <person name="Lucas S."/>
            <person name="Lapidus A."/>
            <person name="Barry K."/>
            <person name="Glavina del Rio T."/>
            <person name="Dalin E."/>
            <person name="Tice H."/>
            <person name="Pitluck S."/>
            <person name="Sims D."/>
            <person name="Brettin T."/>
            <person name="Bruce D."/>
            <person name="Detter J.C."/>
            <person name="Han C."/>
            <person name="Schmutz J."/>
            <person name="Larimer F."/>
            <person name="Land M."/>
            <person name="Hauser L."/>
            <person name="Kyrpides N."/>
            <person name="Mikhailova N."/>
            <person name="Brettar I."/>
            <person name="Rodrigues J."/>
            <person name="Konstantinidis K."/>
            <person name="Tiedje J."/>
            <person name="Richardson P."/>
        </authorList>
    </citation>
    <scope>NUCLEOTIDE SEQUENCE [LARGE SCALE GENOMIC DNA]</scope>
    <source>
        <strain>OS185</strain>
    </source>
</reference>
<proteinExistence type="inferred from homology"/>